<proteinExistence type="inferred from homology"/>
<keyword id="KW-0521">NADP</keyword>
<keyword id="KW-0547">Nucleotide-binding</keyword>
<keyword id="KW-0560">Oxidoreductase</keyword>
<accession>D7UPN2</accession>
<protein>
    <recommendedName>
        <fullName evidence="8">Trans-enoyl reductase ACTTS2</fullName>
        <ecNumber evidence="11">1.-.-.-</ecNumber>
    </recommendedName>
    <alternativeName>
        <fullName evidence="8">ACT-toxin biosynthesis protein S2</fullName>
    </alternativeName>
</protein>
<name>ACTS2_ALTAL</name>
<gene>
    <name evidence="8" type="primary">ACTTS2</name>
</gene>
<feature type="chain" id="PRO_0000444864" description="Trans-enoyl reductase ACTTS2">
    <location>
        <begin position="1"/>
        <end position="343"/>
    </location>
</feature>
<feature type="binding site" evidence="1">
    <location>
        <begin position="42"/>
        <end position="45"/>
    </location>
    <ligand>
        <name>NADP(+)</name>
        <dbReference type="ChEBI" id="CHEBI:58349"/>
    </ligand>
</feature>
<feature type="binding site" evidence="2">
    <location>
        <begin position="128"/>
        <end position="135"/>
    </location>
    <ligand>
        <name>substrate</name>
    </ligand>
</feature>
<feature type="binding site" evidence="1">
    <location>
        <begin position="162"/>
        <end position="165"/>
    </location>
    <ligand>
        <name>NADP(+)</name>
        <dbReference type="ChEBI" id="CHEBI:58349"/>
    </ligand>
</feature>
<feature type="binding site" evidence="1">
    <location>
        <begin position="185"/>
        <end position="188"/>
    </location>
    <ligand>
        <name>NADP(+)</name>
        <dbReference type="ChEBI" id="CHEBI:58349"/>
    </ligand>
</feature>
<feature type="binding site" evidence="1">
    <location>
        <position position="203"/>
    </location>
    <ligand>
        <name>NADP(+)</name>
        <dbReference type="ChEBI" id="CHEBI:58349"/>
    </ligand>
</feature>
<feature type="binding site" evidence="2">
    <location>
        <begin position="268"/>
        <end position="272"/>
    </location>
    <ligand>
        <name>substrate</name>
    </ligand>
</feature>
<feature type="binding site" evidence="1">
    <location>
        <begin position="333"/>
        <end position="334"/>
    </location>
    <ligand>
        <name>NADP(+)</name>
        <dbReference type="ChEBI" id="CHEBI:58349"/>
    </ligand>
</feature>
<dbReference type="EC" id="1.-.-.-" evidence="11"/>
<dbReference type="EMBL" id="AB510353">
    <property type="protein sequence ID" value="BAJ09790.1"/>
    <property type="molecule type" value="Genomic_DNA"/>
</dbReference>
<dbReference type="EMBL" id="AB516322">
    <property type="protein sequence ID" value="BAJ14523.1"/>
    <property type="molecule type" value="Genomic_DNA"/>
</dbReference>
<dbReference type="SMR" id="D7UPN2"/>
<dbReference type="VEuPathDB" id="FungiDB:CC77DRAFT_945763"/>
<dbReference type="GO" id="GO:0000166">
    <property type="term" value="F:nucleotide binding"/>
    <property type="evidence" value="ECO:0007669"/>
    <property type="project" value="UniProtKB-KW"/>
</dbReference>
<dbReference type="GO" id="GO:0016651">
    <property type="term" value="F:oxidoreductase activity, acting on NAD(P)H"/>
    <property type="evidence" value="ECO:0007669"/>
    <property type="project" value="InterPro"/>
</dbReference>
<dbReference type="CDD" id="cd08249">
    <property type="entry name" value="enoyl_reductase_like"/>
    <property type="match status" value="1"/>
</dbReference>
<dbReference type="Gene3D" id="3.90.180.10">
    <property type="entry name" value="Medium-chain alcohol dehydrogenases, catalytic domain"/>
    <property type="match status" value="1"/>
</dbReference>
<dbReference type="Gene3D" id="3.40.50.720">
    <property type="entry name" value="NAD(P)-binding Rossmann-like Domain"/>
    <property type="match status" value="1"/>
</dbReference>
<dbReference type="InterPro" id="IPR013149">
    <property type="entry name" value="ADH-like_C"/>
</dbReference>
<dbReference type="InterPro" id="IPR013154">
    <property type="entry name" value="ADH-like_N"/>
</dbReference>
<dbReference type="InterPro" id="IPR011032">
    <property type="entry name" value="GroES-like_sf"/>
</dbReference>
<dbReference type="InterPro" id="IPR036291">
    <property type="entry name" value="NAD(P)-bd_dom_sf"/>
</dbReference>
<dbReference type="InterPro" id="IPR020843">
    <property type="entry name" value="PKS_ER"/>
</dbReference>
<dbReference type="InterPro" id="IPR047122">
    <property type="entry name" value="Trans-enoyl_RdTase-like"/>
</dbReference>
<dbReference type="PANTHER" id="PTHR45348">
    <property type="entry name" value="HYPOTHETICAL OXIDOREDUCTASE (EUROFUNG)"/>
    <property type="match status" value="1"/>
</dbReference>
<dbReference type="PANTHER" id="PTHR45348:SF2">
    <property type="entry name" value="ZINC-TYPE ALCOHOL DEHYDROGENASE-LIKE PROTEIN C2E1P3.01"/>
    <property type="match status" value="1"/>
</dbReference>
<dbReference type="Pfam" id="PF08240">
    <property type="entry name" value="ADH_N"/>
    <property type="match status" value="1"/>
</dbReference>
<dbReference type="Pfam" id="PF00107">
    <property type="entry name" value="ADH_zinc_N"/>
    <property type="match status" value="1"/>
</dbReference>
<dbReference type="SMART" id="SM00829">
    <property type="entry name" value="PKS_ER"/>
    <property type="match status" value="1"/>
</dbReference>
<dbReference type="SUPFAM" id="SSF50129">
    <property type="entry name" value="GroES-like"/>
    <property type="match status" value="1"/>
</dbReference>
<dbReference type="SUPFAM" id="SSF51735">
    <property type="entry name" value="NAD(P)-binding Rossmann-fold domains"/>
    <property type="match status" value="1"/>
</dbReference>
<comment type="function">
    <text evidence="3 4 5 6 7 9">Trans-enoyl reductase; part of the gene clusters that mediate the biosynthesis of the host-selective toxins (HSTs) ACT-toxins responsible for brown spot of tangerine disease by the tangerine pathotype which affects tangerines and mandarins (PubMed:19271978). ACT-toxins consist of three moieties, 9,10-epoxy-8-hydroxy-9-methyl-decatrienoic acid (EDA), valine and a polyketide (PubMed:22846083). ACT-toxin I is toxic to both citrus and pear; toxin II the 5''-deoxy derivative of ACT-toxin I, is highly toxic to pear and slightly toxic to citrus (PubMed:22846083). On cellular level, ACT-toxins affect plasma membrane of susceptible cells and cause a sudden increase in loss of K(+) after a few minutes of toxin treatment (PubMed:22846083). The acyl-CoA ligase ACTT1, the hydrolase ACTT2, the enoyl-CoA hydratases ACTT3 and ACTT6, and the acyl-CoA synthetase ACTT5 are all involved in the biosynthesis of the AK-, AF- and ACT-toxin common 9,10-epoxy-8-hydroxy-9-methyl-decatrienoic acid (EDA) structural moiety (PubMed:18944496, PubMed:18986255, PubMed:19271978). The exact role of each enzyme, and of additional enzymes identified within the AF-toxin clusters have still to be determined (PubMed:18944496, PubMed:18986255, PubMed:19271978). On the other hand, ACTTS1 to ACTTS4 are specific to the tangerine pathotype (PubMed:22846083). The function of ACTTS3 is to elongate the polyketide chain portion of ACT-toxin that is unique to this toxin (PubMed:20192828). The enoyl-reductase ACTTS2 might complement the missing enoyl-reductase (ER) domain in ACTTS3 in the synthesis of the polyketide portion of ACT-toxin (PubMed:20055645). The roles of the nonribosomal peptide synthetases-related proteins ACTTS1 and ACTTS4 have also still not been elucidated (PubMed:22846083).</text>
</comment>
<comment type="pathway">
    <text evidence="6">Mycotoxin biosynthesis.</text>
</comment>
<comment type="subunit">
    <text evidence="1">Monomer.</text>
</comment>
<comment type="disruption phenotype">
    <text evidence="6">Targeted gene disruption leasd to a reduction in ACT-toxin production and pathogenicity, and transcriptional knockdown of ACTTS2 using RNA silencing results in complete loss of ACT-toxin production and pathogenicity (PubMed:20055645). Does not affect growth rate, spore formation, and spore germination (PubMed:20055645).</text>
</comment>
<comment type="miscellaneous">
    <text evidence="4">Gene clusters encoding host-selective toxins (HSTs) are localized on conditionally dispensable chromosomes (CDCs), also called supernumerary chromosomes, where they are present in multiple copies (PubMed:18986255). The CDCs are not essential for saprophytic growth but controls host-selective pathogenicity (PubMed:18986255). Although conventional disruption of ACTT2 could not be accomplished due to the high number of the copies identified in the genome, the high sequence identity among these copies of ACTT2 is likely an advantage for RNA silencing, because it allows knockdown of all copies of this gene simultaneously (PubMed:18986255).</text>
</comment>
<comment type="similarity">
    <text evidence="10">Belongs to the zinc-containing alcohol dehydrogenase family.</text>
</comment>
<sequence>MLTRRALVVQSQGEVQVEEIPLPTLRDEYITVKVKAVALNPGDWKMLYGPHATPGSILGCDYSGVVEKVGRAVNALLTPGDRVAGFAFGGCPYNHDEGGFASYVTAKGDIQAKLSDSISFEDAATLGVGITTVGQAMYQALGLPLPPAIIQEAASILVYGASTATGTLAVQYAKLTGLKVFATASPHNFDLLKKLGADEVFDYRDPECGAKIRTVTNGLLSLVFDTISEGSSPAIWAAAMGAKGGKYTALLPIKNFPRSDVKVTTILGYTALGVKVSDHLPANQKDFEFSAKFWKLSQHLLEKEKIKTHPVGVRQGGIDAIPQGLQDLKNGRVSGVKLVYKID</sequence>
<evidence type="ECO:0000250" key="1">
    <source>
        <dbReference type="UniProtKB" id="Q9Y7D0"/>
    </source>
</evidence>
<evidence type="ECO:0000255" key="2"/>
<evidence type="ECO:0000269" key="3">
    <source>
    </source>
</evidence>
<evidence type="ECO:0000269" key="4">
    <source>
    </source>
</evidence>
<evidence type="ECO:0000269" key="5">
    <source>
    </source>
</evidence>
<evidence type="ECO:0000269" key="6">
    <source>
    </source>
</evidence>
<evidence type="ECO:0000269" key="7">
    <source>
    </source>
</evidence>
<evidence type="ECO:0000303" key="8">
    <source>
    </source>
</evidence>
<evidence type="ECO:0000303" key="9">
    <source>
    </source>
</evidence>
<evidence type="ECO:0000305" key="10"/>
<evidence type="ECO:0000305" key="11">
    <source>
    </source>
</evidence>
<organism>
    <name type="scientific">Alternaria alternata</name>
    <name type="common">Alternaria rot fungus</name>
    <name type="synonym">Torula alternata</name>
    <dbReference type="NCBI Taxonomy" id="5599"/>
    <lineage>
        <taxon>Eukaryota</taxon>
        <taxon>Fungi</taxon>
        <taxon>Dikarya</taxon>
        <taxon>Ascomycota</taxon>
        <taxon>Pezizomycotina</taxon>
        <taxon>Dothideomycetes</taxon>
        <taxon>Pleosporomycetidae</taxon>
        <taxon>Pleosporales</taxon>
        <taxon>Pleosporineae</taxon>
        <taxon>Pleosporaceae</taxon>
        <taxon>Alternaria</taxon>
        <taxon>Alternaria sect. Alternaria</taxon>
        <taxon>Alternaria alternata complex</taxon>
    </lineage>
</organism>
<reference key="1">
    <citation type="journal article" date="2010" name="Phytopathology">
        <title>Role of the host-selective ACT-toxin synthesis gene ACTTS2 encoding an enoyl-reductase in pathogenicity of the tangerine pathotype of Alternaria alternata.</title>
        <authorList>
            <person name="Ajiro N."/>
            <person name="Miyamoto Y."/>
            <person name="Masunaka A."/>
            <person name="Tsuge T."/>
            <person name="Yamamoto M."/>
            <person name="Ohtani K."/>
            <person name="Fukumoto T."/>
            <person name="Gomi K."/>
            <person name="Peever T.L."/>
            <person name="Izumi Y."/>
            <person name="Tada Y."/>
            <person name="Akimitsu K."/>
        </authorList>
    </citation>
    <scope>NUCLEOTIDE SEQUENCE [GENOMIC DNA]</scope>
    <scope>FUNCTION</scope>
    <scope>DISRUPTION PHENOTYPE</scope>
    <scope>PATHWAY</scope>
    <source>
        <strain>SH20</strain>
    </source>
</reference>
<reference key="2">
    <citation type="journal article" date="2000" name="Phytopathology">
        <title>Distribution and characterization of AKT homologs in the tangerine pathotype of Alternaria alternata.</title>
        <authorList>
            <person name="Masunaka A."/>
            <person name="Tanaka A."/>
            <person name="Tsuge T."/>
            <person name="Peever T.L."/>
            <person name="Timmer L.W."/>
            <person name="Yamamoto M."/>
            <person name="Yamamoto H."/>
            <person name="Akimitsu K."/>
        </authorList>
    </citation>
    <scope>FUNCTION</scope>
</reference>
<reference key="3">
    <citation type="journal article" date="2008" name="Mol. Plant Microbe Interact.">
        <title>Functional analysis of a multicopy host-selective ACT-toxin biosynthesis gene in the tangerine pathotype of Alternaria alternata using RNA silencing.</title>
        <authorList>
            <person name="Miyamoto Y."/>
            <person name="Masunaka A."/>
            <person name="Tsuge T."/>
            <person name="Yamamoto M."/>
            <person name="Ohtani K."/>
            <person name="Fukumoto T."/>
            <person name="Gomi K."/>
            <person name="Peever T.L."/>
            <person name="Akimitsu K."/>
        </authorList>
    </citation>
    <scope>FUNCTION</scope>
    <source>
        <strain>SH20</strain>
    </source>
</reference>
<reference key="4">
    <citation type="journal article" date="2009" name="Phytopathology">
        <title>Function of genes encoding acyl-CoA synthetase and enoyl-CoA hydratase for host-selective act-toxin biosynthesis in the tangerine pathotype of Alternaria alternata.</title>
        <authorList>
            <person name="Miyamoto M."/>
            <person name="Ishii Y."/>
            <person name="Honda A."/>
            <person name="Masunaka A."/>
            <person name="Tsuge T."/>
            <person name="Yamamoto M."/>
            <person name="Ohtani K."/>
            <person name="Fukumoto T."/>
            <person name="Gomi K."/>
            <person name="Peever T.L."/>
            <person name="Akimitsu K."/>
        </authorList>
    </citation>
    <scope>FUNCTION</scope>
    <source>
        <strain>SH20</strain>
    </source>
</reference>
<reference key="5">
    <citation type="journal article" date="2010" name="Mol. Plant Microbe Interact.">
        <title>ACTTS3 encoding a polyketide synthase is essential for the biosynthesis of ACT-toxin and pathogenicity in the tangerine pathotype of Alternaria alternata.</title>
        <authorList>
            <person name="Miyamoto Y."/>
            <person name="Masunaka A."/>
            <person name="Tsuge T."/>
            <person name="Yamamoto M."/>
            <person name="Ohtani K."/>
            <person name="Fukumoto T."/>
            <person name="Gomi K."/>
            <person name="Peever T.L."/>
            <person name="Tada Y."/>
            <person name="Ichimura K."/>
            <person name="Akimitsu K."/>
        </authorList>
    </citation>
    <scope>FUNCTION</scope>
    <source>
        <strain>SH20</strain>
    </source>
</reference>
<reference key="6">
    <citation type="journal article" date="2013" name="FEMS Microbiol. Rev.">
        <title>Host-selective toxins produced by the plant pathogenic fungus Alternaria alternata.</title>
        <authorList>
            <person name="Tsuge T."/>
            <person name="Harimoto Y."/>
            <person name="Akimitsu K."/>
            <person name="Ohtani K."/>
            <person name="Kodama M."/>
            <person name="Akagi Y."/>
            <person name="Egusa M."/>
            <person name="Yamamoto M."/>
            <person name="Otani H."/>
        </authorList>
    </citation>
    <scope>REVIEW ON HOST-SELECTIVE TOXINS</scope>
</reference>